<evidence type="ECO:0000255" key="1"/>
<evidence type="ECO:0000255" key="2">
    <source>
        <dbReference type="PROSITE-ProRule" id="PRU00175"/>
    </source>
</evidence>
<evidence type="ECO:0000256" key="3">
    <source>
        <dbReference type="SAM" id="MobiDB-lite"/>
    </source>
</evidence>
<evidence type="ECO:0000269" key="4">
    <source>
    </source>
</evidence>
<evidence type="ECO:0000269" key="5">
    <source>
    </source>
</evidence>
<evidence type="ECO:0000269" key="6">
    <source>
    </source>
</evidence>
<evidence type="ECO:0000269" key="7">
    <source>
    </source>
</evidence>
<evidence type="ECO:0000269" key="8">
    <source>
    </source>
</evidence>
<evidence type="ECO:0000269" key="9">
    <source>
    </source>
</evidence>
<evidence type="ECO:0000269" key="10">
    <source>
    </source>
</evidence>
<evidence type="ECO:0000305" key="11">
    <source>
    </source>
</evidence>
<evidence type="ECO:0000305" key="12">
    <source>
    </source>
</evidence>
<evidence type="ECO:0000305" key="13">
    <source>
    </source>
</evidence>
<gene>
    <name type="primary">ASI1</name>
    <name type="ordered locus">YMR119W</name>
    <name type="ORF">YM8564.01</name>
    <name type="ORF">YM9718.18</name>
</gene>
<sequence>MNSSTSSENVFINSFSYLNQTSQAVISGNSTFANVINFPYRLGLSFIGAVNLQYEQTVKSEEIPPTLRSVFDTIGFFFSPYAIFCFVIAIVLNRFVVFYAVLNNGSRRTLPLWLSNVFHVSAVVVLAMVSLGPLTLGKDFKILGDPAFAQEKFLLNIFYAFAYSYCVETIFTIMRNSSPLEGTDYSLFELSIQFYTMTNNNTKFLDSPDYIIDCSMAILSRILIHLVEIFRLRNYRLLFSTIMNLCHICYLGIRVKQGGWKSLPFSVKFRHFPKLFSVSIICLSLLIFKLSCLIRWDPFGKSRNSCELLQFYPLSRNWKKYLNYTGEEDFSAMATKFALLLCSGTELMEKGIRREFPAINIPDNVNEKFFISGYLNELSKPYKENTSISFPKKNSSILKQRFFLMFPKSIIWIMKKLVGQVFFGFRDNKDEDIPDNDPSKMLKITKTNSLNNSAGHKEDIELELLNTSDDEYSEDYEPSEVESLGDSDEENLEEDSLIFNETRDALLDLFSSEDNEVHTDYNWIMSTSRILQQKLLSDKTLTRASILDTKLSEVDETFGTESDFDLSCAVCKVNERNTVLWPCRCFAICEDCRISLGLRGFSTCVCCRSKVHGYCKVHPVSDSK</sequence>
<accession>P54074</accession>
<accession>D6VZU2</accession>
<organism>
    <name type="scientific">Saccharomyces cerevisiae (strain ATCC 204508 / S288c)</name>
    <name type="common">Baker's yeast</name>
    <dbReference type="NCBI Taxonomy" id="559292"/>
    <lineage>
        <taxon>Eukaryota</taxon>
        <taxon>Fungi</taxon>
        <taxon>Dikarya</taxon>
        <taxon>Ascomycota</taxon>
        <taxon>Saccharomycotina</taxon>
        <taxon>Saccharomycetes</taxon>
        <taxon>Saccharomycetales</taxon>
        <taxon>Saccharomycetaceae</taxon>
        <taxon>Saccharomyces</taxon>
    </lineage>
</organism>
<reference key="1">
    <citation type="journal article" date="1997" name="Nature">
        <title>The nucleotide sequence of Saccharomyces cerevisiae chromosome XIII.</title>
        <authorList>
            <person name="Bowman S."/>
            <person name="Churcher C.M."/>
            <person name="Badcock K."/>
            <person name="Brown D."/>
            <person name="Chillingworth T."/>
            <person name="Connor R."/>
            <person name="Dedman K."/>
            <person name="Devlin K."/>
            <person name="Gentles S."/>
            <person name="Hamlin N."/>
            <person name="Hunt S."/>
            <person name="Jagels K."/>
            <person name="Lye G."/>
            <person name="Moule S."/>
            <person name="Odell C."/>
            <person name="Pearson D."/>
            <person name="Rajandream M.A."/>
            <person name="Rice P."/>
            <person name="Skelton J."/>
            <person name="Walsh S.V."/>
            <person name="Whitehead S."/>
            <person name="Barrell B.G."/>
        </authorList>
    </citation>
    <scope>NUCLEOTIDE SEQUENCE [LARGE SCALE GENOMIC DNA]</scope>
    <source>
        <strain>ATCC 204508 / S288c</strain>
    </source>
</reference>
<reference key="2">
    <citation type="journal article" date="2014" name="G3 (Bethesda)">
        <title>The reference genome sequence of Saccharomyces cerevisiae: Then and now.</title>
        <authorList>
            <person name="Engel S.R."/>
            <person name="Dietrich F.S."/>
            <person name="Fisk D.G."/>
            <person name="Binkley G."/>
            <person name="Balakrishnan R."/>
            <person name="Costanzo M.C."/>
            <person name="Dwight S.S."/>
            <person name="Hitz B.C."/>
            <person name="Karra K."/>
            <person name="Nash R.S."/>
            <person name="Weng S."/>
            <person name="Wong E.D."/>
            <person name="Lloyd P."/>
            <person name="Skrzypek M.S."/>
            <person name="Miyasato S.R."/>
            <person name="Simison M."/>
            <person name="Cherry J.M."/>
        </authorList>
    </citation>
    <scope>GENOME REANNOTATION</scope>
    <source>
        <strain>ATCC 204508 / S288c</strain>
    </source>
</reference>
<reference key="3">
    <citation type="journal article" date="2001" name="Genetics">
        <title>Suppressors of ssy1 and ptr3 null mutations define novel amino acid sensor-independent genes in Saccharomyces cerevisiae.</title>
        <authorList>
            <person name="Forsberg H."/>
            <person name="Hammar M."/>
            <person name="Andreasson C."/>
            <person name="Moliner A."/>
            <person name="Ljungdahl P.O."/>
        </authorList>
    </citation>
    <scope>FUNCTION</scope>
</reference>
<reference key="4">
    <citation type="journal article" date="2003" name="Nature">
        <title>Global analysis of protein localization in budding yeast.</title>
        <authorList>
            <person name="Huh W.-K."/>
            <person name="Falvo J.V."/>
            <person name="Gerke L.C."/>
            <person name="Carroll A.S."/>
            <person name="Howson R.W."/>
            <person name="Weissman J.S."/>
            <person name="O'Shea E.K."/>
        </authorList>
    </citation>
    <scope>SUBCELLULAR LOCATION [LARGE SCALE ANALYSIS]</scope>
</reference>
<reference key="5">
    <citation type="journal article" date="2006" name="J. Cell Biol.">
        <title>Asi1 is an inner nuclear membrane protein that restricts promoter access of two latent transcription factors.</title>
        <authorList>
            <person name="Boban M."/>
            <person name="Zargari A."/>
            <person name="Andreasson C."/>
            <person name="Heessen S."/>
            <person name="Thyberg J."/>
            <person name="Ljungdahl P.O."/>
        </authorList>
    </citation>
    <scope>FUNCTION</scope>
    <scope>SUBCELLULAR LOCATION</scope>
    <scope>GLYCOSYLATION AT ASN-2; ASN-19 AND ASN-29</scope>
    <scope>TOPOLOGY</scope>
    <scope>MUTAGENESIS OF CYS-583 AND CYS-585</scope>
</reference>
<reference key="6">
    <citation type="journal article" date="2006" name="Proc. Natl. Acad. Sci. U.S.A.">
        <title>A global topology map of the Saccharomyces cerevisiae membrane proteome.</title>
        <authorList>
            <person name="Kim H."/>
            <person name="Melen K."/>
            <person name="Oesterberg M."/>
            <person name="von Heijne G."/>
        </authorList>
    </citation>
    <scope>TOPOLOGY [LARGE SCALE ANALYSIS]</scope>
    <source>
        <strain>ATCC 208353 / W303-1A</strain>
    </source>
</reference>
<reference key="7">
    <citation type="journal article" date="2007" name="J. Biol. Chem.">
        <title>Inner nuclear membrane proteins Asi1, Asi2, and Asi3 function in concert to maintain the latent properties of transcription factors Stp1 and Stp2.</title>
        <authorList>
            <person name="Zargari A."/>
            <person name="Boban M."/>
            <person name="Heessen S."/>
            <person name="Andreasson C."/>
            <person name="Thyberg J."/>
            <person name="Ljungdahl P.O."/>
        </authorList>
    </citation>
    <scope>FUNCTION</scope>
    <scope>SUBCELLULAR LOCATION</scope>
    <scope>GLYCOSYLATION AT ASN-2; ASN-19 AND ASN-29</scope>
    <scope>INTERACTION WITH ASI3</scope>
</reference>
<reference key="8">
    <citation type="journal article" date="2014" name="Science">
        <title>Quality control of inner nuclear membrane proteins by the Asi complex.</title>
        <authorList>
            <person name="Foresti O."/>
            <person name="Rodriguez-Vaello V."/>
            <person name="Funaya C."/>
            <person name="Carvalho P."/>
        </authorList>
    </citation>
    <scope>FUNCTION</scope>
    <scope>CATALYTIC ACTIVITY</scope>
    <scope>SUBUNIT</scope>
</reference>
<reference key="9">
    <citation type="journal article" date="2016" name="J. Cell Biol.">
        <title>Analysis of membrane proteins localizing to the inner nuclear envelope in living cells.</title>
        <authorList>
            <person name="Smoyer C.J."/>
            <person name="Katta S.S."/>
            <person name="Gardner J.M."/>
            <person name="Stoltz L."/>
            <person name="McCroskey S."/>
            <person name="Bradford W.D."/>
            <person name="McClain M."/>
            <person name="Smith S.E."/>
            <person name="Slaughter B.D."/>
            <person name="Unruh J.R."/>
            <person name="Jaspersen S.L."/>
        </authorList>
    </citation>
    <scope>SUBCELLULAR LOCATION</scope>
</reference>
<feature type="chain" id="PRO_0000203295" description="ERAD-associated E3 ubiquitin-protein ligase ASI1">
    <location>
        <begin position="1"/>
        <end position="624"/>
    </location>
</feature>
<feature type="topological domain" description="Perinuclear space" evidence="6 12">
    <location>
        <begin position="1"/>
        <end position="69"/>
    </location>
</feature>
<feature type="transmembrane region" description="Helical" evidence="1">
    <location>
        <begin position="70"/>
        <end position="90"/>
    </location>
</feature>
<feature type="topological domain" description="Nuclear" evidence="6 12">
    <location>
        <begin position="91"/>
        <end position="116"/>
    </location>
</feature>
<feature type="transmembrane region" description="Helical" evidence="1">
    <location>
        <begin position="117"/>
        <end position="137"/>
    </location>
</feature>
<feature type="topological domain" description="Perinuclear space" evidence="6 12">
    <location>
        <begin position="138"/>
        <end position="152"/>
    </location>
</feature>
<feature type="transmembrane region" description="Helical" evidence="1">
    <location>
        <begin position="153"/>
        <end position="173"/>
    </location>
</feature>
<feature type="topological domain" description="Nuclear" evidence="11 12">
    <location>
        <begin position="174"/>
        <end position="209"/>
    </location>
</feature>
<feature type="transmembrane region" description="Helical" evidence="1">
    <location>
        <begin position="210"/>
        <end position="230"/>
    </location>
</feature>
<feature type="topological domain" description="Perinuclear space" evidence="6 12">
    <location>
        <begin position="231"/>
        <end position="273"/>
    </location>
</feature>
<feature type="transmembrane region" description="Helical" evidence="1">
    <location>
        <begin position="274"/>
        <end position="294"/>
    </location>
</feature>
<feature type="topological domain" description="Nuclear" evidence="6 7">
    <location>
        <begin position="295"/>
        <end position="624"/>
    </location>
</feature>
<feature type="zinc finger region" description="RING-type; atypical" evidence="2">
    <location>
        <begin position="568"/>
        <end position="608"/>
    </location>
</feature>
<feature type="region of interest" description="Disordered" evidence="3">
    <location>
        <begin position="467"/>
        <end position="490"/>
    </location>
</feature>
<feature type="compositionally biased region" description="Acidic residues" evidence="3">
    <location>
        <begin position="468"/>
        <end position="490"/>
    </location>
</feature>
<feature type="glycosylation site" description="N-linked (GlcNAc...) asparagine" evidence="6 8">
    <location>
        <position position="2"/>
    </location>
</feature>
<feature type="glycosylation site" description="N-linked (GlcNAc...) asparagine" evidence="6 8">
    <location>
        <position position="19"/>
    </location>
</feature>
<feature type="glycosylation site" description="N-linked (GlcNAc...) asparagine" evidence="6 8">
    <location>
        <position position="29"/>
    </location>
</feature>
<feature type="mutagenesis site" description="In ASI1-21HA; when associated with S-585; abolishes function." evidence="6">
    <original>C</original>
    <variation>S</variation>
    <location>
        <position position="583"/>
    </location>
</feature>
<feature type="mutagenesis site" description="In ASI1-21HA; when associated with S-583; abolishes function." evidence="6">
    <original>C</original>
    <variation>S</variation>
    <location>
        <position position="585"/>
    </location>
</feature>
<comment type="function">
    <text evidence="4 6 8 9">E3 ubiquitin-protein ligase which transfers ubiquitin to substrates promoting their degradation. Part of the nuclear inner membrane (INM)-specific branch of the ER-associated degradation (ERAD) pathway, required for the elimination of misfolded proteins in the INM, a specialized ER subdomain. Required for ERG11 degradation (PubMed:25236469). Negative regulator of SPS-sensor signaling. Together with ASI2 and ASI3, prevents the unprocessed precursor forms of STP1 and STP2 that escape cytoplasmic anchoring from inducing SPS-sensor-regulated genes in the absence of inducing signals (PubMed:16735580, PubMed:17085444). Controls amino acid permease (AAP) gene expression in response to amino acid availability, a process mediated by the transcription factors STP1 and STP1 (PubMed:11454748).</text>
</comment>
<comment type="catalytic activity">
    <reaction evidence="13">
        <text>S-ubiquitinyl-[E2 ubiquitin-conjugating enzyme]-L-cysteine + [acceptor protein]-L-lysine = [E2 ubiquitin-conjugating enzyme]-L-cysteine + N(6)-ubiquitinyl-[acceptor protein]-L-lysine.</text>
        <dbReference type="EC" id="2.3.2.27"/>
    </reaction>
</comment>
<comment type="subunit">
    <text evidence="8 9">Component of the Asi complex, which contains ASI1, ASI2 and ASI3 (PubMed:25236469). Interacts directly with ASI3 (PubMed:17085444).</text>
</comment>
<comment type="interaction">
    <interactant intactId="EBI-27241">
        <id>P54074</id>
    </interactant>
    <interactant intactId="EBI-28603">
        <id>P53983</id>
        <label>ASI3</label>
    </interactant>
    <organismsDiffer>false</organismsDiffer>
    <experiments>5</experiments>
</comment>
<comment type="subcellular location">
    <subcellularLocation>
        <location evidence="5 6 8 10">Nucleus inner membrane</location>
        <topology evidence="5 6 8">Multi-pass membrane protein</topology>
    </subcellularLocation>
</comment>
<comment type="PTM">
    <text evidence="6 8">Glycosylation is not required for ASI1 function.</text>
</comment>
<keyword id="KW-0325">Glycoprotein</keyword>
<keyword id="KW-0472">Membrane</keyword>
<keyword id="KW-0479">Metal-binding</keyword>
<keyword id="KW-0539">Nucleus</keyword>
<keyword id="KW-1185">Reference proteome</keyword>
<keyword id="KW-0808">Transferase</keyword>
<keyword id="KW-0812">Transmembrane</keyword>
<keyword id="KW-1133">Transmembrane helix</keyword>
<keyword id="KW-0862">Zinc</keyword>
<keyword id="KW-0863">Zinc-finger</keyword>
<name>ASI1_YEAST</name>
<proteinExistence type="evidence at protein level"/>
<dbReference type="EC" id="2.3.2.27"/>
<dbReference type="EMBL" id="Z49702">
    <property type="protein sequence ID" value="CAA89757.1"/>
    <property type="molecule type" value="Genomic_DNA"/>
</dbReference>
<dbReference type="EMBL" id="Z49273">
    <property type="protein sequence ID" value="CAA89268.1"/>
    <property type="molecule type" value="Genomic_DNA"/>
</dbReference>
<dbReference type="EMBL" id="BK006946">
    <property type="protein sequence ID" value="DAA10016.1"/>
    <property type="molecule type" value="Genomic_DNA"/>
</dbReference>
<dbReference type="PIR" id="S54581">
    <property type="entry name" value="S54581"/>
</dbReference>
<dbReference type="RefSeq" id="NP_013837.1">
    <property type="nucleotide sequence ID" value="NM_001182619.1"/>
</dbReference>
<dbReference type="BioGRID" id="35296">
    <property type="interactions" value="99"/>
</dbReference>
<dbReference type="ComplexPortal" id="CPX-3248">
    <property type="entry name" value="Asi ubiquitin ligase complex"/>
</dbReference>
<dbReference type="DIP" id="DIP-7733N"/>
<dbReference type="FunCoup" id="P54074">
    <property type="interactions" value="42"/>
</dbReference>
<dbReference type="IntAct" id="P54074">
    <property type="interactions" value="5"/>
</dbReference>
<dbReference type="STRING" id="4932.YMR119W"/>
<dbReference type="GlyCosmos" id="P54074">
    <property type="glycosylation" value="3 sites, No reported glycans"/>
</dbReference>
<dbReference type="GlyGen" id="P54074">
    <property type="glycosylation" value="3 sites"/>
</dbReference>
<dbReference type="iPTMnet" id="P54074"/>
<dbReference type="PaxDb" id="4932-YMR119W"/>
<dbReference type="PeptideAtlas" id="P54074"/>
<dbReference type="EnsemblFungi" id="YMR119W_mRNA">
    <property type="protein sequence ID" value="YMR119W"/>
    <property type="gene ID" value="YMR119W"/>
</dbReference>
<dbReference type="GeneID" id="855147"/>
<dbReference type="KEGG" id="sce:YMR119W"/>
<dbReference type="AGR" id="SGD:S000004725"/>
<dbReference type="SGD" id="S000004725">
    <property type="gene designation" value="ASI1"/>
</dbReference>
<dbReference type="VEuPathDB" id="FungiDB:YMR119W"/>
<dbReference type="eggNOG" id="ENOG502QV7Y">
    <property type="taxonomic scope" value="Eukaryota"/>
</dbReference>
<dbReference type="GeneTree" id="ENSGT00940000176791"/>
<dbReference type="HOGENOM" id="CLU_026112_0_0_1"/>
<dbReference type="InParanoid" id="P54074"/>
<dbReference type="OMA" id="CFALCED"/>
<dbReference type="OrthoDB" id="66726at2759"/>
<dbReference type="BioCyc" id="YEAST:G3O-32814-MONOMER"/>
<dbReference type="BioGRID-ORCS" id="855147">
    <property type="hits" value="0 hits in 10 CRISPR screens"/>
</dbReference>
<dbReference type="PRO" id="PR:P54074"/>
<dbReference type="Proteomes" id="UP000002311">
    <property type="component" value="Chromosome XIII"/>
</dbReference>
<dbReference type="RNAct" id="P54074">
    <property type="molecule type" value="protein"/>
</dbReference>
<dbReference type="GO" id="GO:0097658">
    <property type="term" value="C:Asi complex"/>
    <property type="evidence" value="ECO:0000314"/>
    <property type="project" value="SGD"/>
</dbReference>
<dbReference type="GO" id="GO:0005637">
    <property type="term" value="C:nuclear inner membrane"/>
    <property type="evidence" value="ECO:0000314"/>
    <property type="project" value="SGD"/>
</dbReference>
<dbReference type="GO" id="GO:0034399">
    <property type="term" value="C:nuclear periphery"/>
    <property type="evidence" value="ECO:0007005"/>
    <property type="project" value="SGD"/>
</dbReference>
<dbReference type="GO" id="GO:0061630">
    <property type="term" value="F:ubiquitin protein ligase activity"/>
    <property type="evidence" value="ECO:0000318"/>
    <property type="project" value="GO_Central"/>
</dbReference>
<dbReference type="GO" id="GO:0004842">
    <property type="term" value="F:ubiquitin-protein transferase activity"/>
    <property type="evidence" value="ECO:0000315"/>
    <property type="project" value="SGD"/>
</dbReference>
<dbReference type="GO" id="GO:0008270">
    <property type="term" value="F:zinc ion binding"/>
    <property type="evidence" value="ECO:0007669"/>
    <property type="project" value="UniProtKB-KW"/>
</dbReference>
<dbReference type="GO" id="GO:0071230">
    <property type="term" value="P:cellular response to amino acid stimulus"/>
    <property type="evidence" value="ECO:0000315"/>
    <property type="project" value="SGD"/>
</dbReference>
<dbReference type="GO" id="GO:0043161">
    <property type="term" value="P:proteasome-mediated ubiquitin-dependent protein catabolic process"/>
    <property type="evidence" value="ECO:0000315"/>
    <property type="project" value="SGD"/>
</dbReference>
<dbReference type="GO" id="GO:0016567">
    <property type="term" value="P:protein ubiquitination"/>
    <property type="evidence" value="ECO:0000318"/>
    <property type="project" value="GO_Central"/>
</dbReference>
<dbReference type="GO" id="GO:0006511">
    <property type="term" value="P:ubiquitin-dependent protein catabolic process"/>
    <property type="evidence" value="ECO:0000315"/>
    <property type="project" value="SGD"/>
</dbReference>
<dbReference type="CDD" id="cd16616">
    <property type="entry name" value="mRING-HC-C4C4_Asi1p-like"/>
    <property type="match status" value="1"/>
</dbReference>
<dbReference type="FunFam" id="3.30.40.10:FF:000616">
    <property type="entry name" value="Asi3p"/>
    <property type="match status" value="1"/>
</dbReference>
<dbReference type="Gene3D" id="3.30.40.10">
    <property type="entry name" value="Zinc/RING finger domain, C3HC4 (zinc finger)"/>
    <property type="match status" value="1"/>
</dbReference>
<dbReference type="InterPro" id="IPR013083">
    <property type="entry name" value="Znf_RING/FYVE/PHD"/>
</dbReference>
<dbReference type="PANTHER" id="PTHR22696">
    <property type="entry name" value="E3 UBIQUITIN-PROTEIN LIGASE RNF26"/>
    <property type="match status" value="1"/>
</dbReference>
<dbReference type="PANTHER" id="PTHR22696:SF1">
    <property type="entry name" value="E3 UBIQUITIN-PROTEIN LIGASE RNF26"/>
    <property type="match status" value="1"/>
</dbReference>
<dbReference type="Pfam" id="PF13920">
    <property type="entry name" value="zf-C3HC4_3"/>
    <property type="match status" value="1"/>
</dbReference>
<protein>
    <recommendedName>
        <fullName>ERAD-associated E3 ubiquitin-protein ligase ASI1</fullName>
        <ecNumber>2.3.2.27</ecNumber>
    </recommendedName>
    <alternativeName>
        <fullName>Amino acid sensor-independent protein 1</fullName>
    </alternativeName>
</protein>